<sequence>MKHKVYSEGLEISTDFNSIISQLSTSDMDIEIDEDNITELLNILTELGCDVDFDEDFSDITDDVLESLMEQDM</sequence>
<reference key="1">
    <citation type="journal article" date="1993" name="Nature">
        <title>Potential virulence determinants in terminal regions of variola smallpox virus genome.</title>
        <authorList>
            <person name="Massung R.F."/>
            <person name="Esposito J.J."/>
            <person name="Liu L.I."/>
            <person name="Qi J."/>
            <person name="Utterback T.R."/>
            <person name="Knight J.C."/>
            <person name="Aubin L."/>
            <person name="Yuran T.E."/>
            <person name="Parsons J.M."/>
            <person name="Loparev V.N."/>
            <person name="Selivanov N.A."/>
            <person name="Cavallaro K.F."/>
            <person name="Kerlavage A.R."/>
            <person name="Mahy B.W.J."/>
            <person name="Venter J.C."/>
        </authorList>
    </citation>
    <scope>NUCLEOTIDE SEQUENCE [GENOMIC DNA]</scope>
    <source>
        <strain>Bangladesh-1975</strain>
    </source>
</reference>
<accession>P0DON4</accession>
<accession>P33872</accession>
<name>PG058_VARV</name>
<gene>
    <name type="primary">OPG058</name>
    <name type="ORF">C18L</name>
    <name type="ORF">F14L</name>
</gene>
<comment type="induction">
    <text evidence="1">Expressed in the early phase of the viral replicative cycle.</text>
</comment>
<comment type="similarity">
    <text evidence="2">Belongs to the orthopoxvirus OPG058 family.</text>
</comment>
<organism>
    <name type="scientific">Variola virus</name>
    <dbReference type="NCBI Taxonomy" id="10255"/>
    <lineage>
        <taxon>Viruses</taxon>
        <taxon>Varidnaviria</taxon>
        <taxon>Bamfordvirae</taxon>
        <taxon>Nucleocytoviricota</taxon>
        <taxon>Pokkesviricetes</taxon>
        <taxon>Chitovirales</taxon>
        <taxon>Poxviridae</taxon>
        <taxon>Chordopoxvirinae</taxon>
        <taxon>Orthopoxvirus</taxon>
    </lineage>
</organism>
<evidence type="ECO:0000250" key="1">
    <source>
        <dbReference type="UniProtKB" id="P68707"/>
    </source>
</evidence>
<evidence type="ECO:0000305" key="2"/>
<proteinExistence type="inferred from homology"/>
<keyword id="KW-0244">Early protein</keyword>
<protein>
    <recommendedName>
        <fullName>Protein OPG058</fullName>
    </recommendedName>
    <alternativeName>
        <fullName>Protein F14</fullName>
    </alternativeName>
</protein>
<feature type="chain" id="PRO_0000448187" description="Protein OPG058">
    <location>
        <begin position="1"/>
        <end position="73"/>
    </location>
</feature>
<organismHost>
    <name type="scientific">Homo sapiens</name>
    <name type="common">Human</name>
    <dbReference type="NCBI Taxonomy" id="9606"/>
</organismHost>
<dbReference type="EMBL" id="L22579">
    <property type="protein sequence ID" value="AAA60786.1"/>
    <property type="molecule type" value="Genomic_DNA"/>
</dbReference>
<dbReference type="PIR" id="T28476">
    <property type="entry name" value="T28476"/>
</dbReference>
<dbReference type="RefSeq" id="NP_042082.1">
    <property type="nucleotide sequence ID" value="NC_001611.1"/>
</dbReference>
<dbReference type="SMR" id="P0DON4"/>
<dbReference type="GeneID" id="1486574"/>
<dbReference type="KEGG" id="vg:1486574"/>
<dbReference type="Proteomes" id="UP000119805">
    <property type="component" value="Segment"/>
</dbReference>
<dbReference type="InterPro" id="IPR009280">
    <property type="entry name" value="Orthopox_F14"/>
</dbReference>
<dbReference type="Pfam" id="PF06076">
    <property type="entry name" value="Orthopox_F14"/>
    <property type="match status" value="1"/>
</dbReference>